<dbReference type="EMBL" id="CU329670">
    <property type="protein sequence ID" value="CAD27502.1"/>
    <property type="molecule type" value="Genomic_DNA"/>
</dbReference>
<dbReference type="RefSeq" id="NP_001018224.1">
    <property type="nucleotide sequence ID" value="NM_001018704.2"/>
</dbReference>
<dbReference type="SMR" id="Q8TFH5"/>
<dbReference type="STRING" id="284812.Q8TFH5"/>
<dbReference type="PaxDb" id="4896-SPAPB17E12.09.1"/>
<dbReference type="EnsemblFungi" id="SPAPB17E12.09.1">
    <property type="protein sequence ID" value="SPAPB17E12.09.1:pep"/>
    <property type="gene ID" value="SPAPB17E12.09"/>
</dbReference>
<dbReference type="KEGG" id="spo:3361395"/>
<dbReference type="PomBase" id="SPAPB17E12.09"/>
<dbReference type="VEuPathDB" id="FungiDB:SPAPB17E12.09"/>
<dbReference type="HOGENOM" id="CLU_1349594_0_0_1"/>
<dbReference type="InParanoid" id="Q8TFH5"/>
<dbReference type="OMA" id="YMNENFS"/>
<dbReference type="PRO" id="PR:Q8TFH5"/>
<dbReference type="Proteomes" id="UP000002485">
    <property type="component" value="Chromosome I"/>
</dbReference>
<dbReference type="GO" id="GO:0032153">
    <property type="term" value="C:cell division site"/>
    <property type="evidence" value="ECO:0007005"/>
    <property type="project" value="PomBase"/>
</dbReference>
<dbReference type="GO" id="GO:0051286">
    <property type="term" value="C:cell tip"/>
    <property type="evidence" value="ECO:0007005"/>
    <property type="project" value="PomBase"/>
</dbReference>
<dbReference type="GO" id="GO:0005737">
    <property type="term" value="C:cytoplasm"/>
    <property type="evidence" value="ECO:0000314"/>
    <property type="project" value="PomBase"/>
</dbReference>
<dbReference type="GO" id="GO:0051321">
    <property type="term" value="P:meiotic cell cycle"/>
    <property type="evidence" value="ECO:0007669"/>
    <property type="project" value="UniProtKB-KW"/>
</dbReference>
<reference key="1">
    <citation type="journal article" date="2002" name="Nature">
        <title>The genome sequence of Schizosaccharomyces pombe.</title>
        <authorList>
            <person name="Wood V."/>
            <person name="Gwilliam R."/>
            <person name="Rajandream M.A."/>
            <person name="Lyne M.H."/>
            <person name="Lyne R."/>
            <person name="Stewart A."/>
            <person name="Sgouros J.G."/>
            <person name="Peat N."/>
            <person name="Hayles J."/>
            <person name="Baker S.G."/>
            <person name="Basham D."/>
            <person name="Bowman S."/>
            <person name="Brooks K."/>
            <person name="Brown D."/>
            <person name="Brown S."/>
            <person name="Chillingworth T."/>
            <person name="Churcher C.M."/>
            <person name="Collins M."/>
            <person name="Connor R."/>
            <person name="Cronin A."/>
            <person name="Davis P."/>
            <person name="Feltwell T."/>
            <person name="Fraser A."/>
            <person name="Gentles S."/>
            <person name="Goble A."/>
            <person name="Hamlin N."/>
            <person name="Harris D.E."/>
            <person name="Hidalgo J."/>
            <person name="Hodgson G."/>
            <person name="Holroyd S."/>
            <person name="Hornsby T."/>
            <person name="Howarth S."/>
            <person name="Huckle E.J."/>
            <person name="Hunt S."/>
            <person name="Jagels K."/>
            <person name="James K.D."/>
            <person name="Jones L."/>
            <person name="Jones M."/>
            <person name="Leather S."/>
            <person name="McDonald S."/>
            <person name="McLean J."/>
            <person name="Mooney P."/>
            <person name="Moule S."/>
            <person name="Mungall K.L."/>
            <person name="Murphy L.D."/>
            <person name="Niblett D."/>
            <person name="Odell C."/>
            <person name="Oliver K."/>
            <person name="O'Neil S."/>
            <person name="Pearson D."/>
            <person name="Quail M.A."/>
            <person name="Rabbinowitsch E."/>
            <person name="Rutherford K.M."/>
            <person name="Rutter S."/>
            <person name="Saunders D."/>
            <person name="Seeger K."/>
            <person name="Sharp S."/>
            <person name="Skelton J."/>
            <person name="Simmonds M.N."/>
            <person name="Squares R."/>
            <person name="Squares S."/>
            <person name="Stevens K."/>
            <person name="Taylor K."/>
            <person name="Taylor R.G."/>
            <person name="Tivey A."/>
            <person name="Walsh S.V."/>
            <person name="Warren T."/>
            <person name="Whitehead S."/>
            <person name="Woodward J.R."/>
            <person name="Volckaert G."/>
            <person name="Aert R."/>
            <person name="Robben J."/>
            <person name="Grymonprez B."/>
            <person name="Weltjens I."/>
            <person name="Vanstreels E."/>
            <person name="Rieger M."/>
            <person name="Schaefer M."/>
            <person name="Mueller-Auer S."/>
            <person name="Gabel C."/>
            <person name="Fuchs M."/>
            <person name="Duesterhoeft A."/>
            <person name="Fritzc C."/>
            <person name="Holzer E."/>
            <person name="Moestl D."/>
            <person name="Hilbert H."/>
            <person name="Borzym K."/>
            <person name="Langer I."/>
            <person name="Beck A."/>
            <person name="Lehrach H."/>
            <person name="Reinhardt R."/>
            <person name="Pohl T.M."/>
            <person name="Eger P."/>
            <person name="Zimmermann W."/>
            <person name="Wedler H."/>
            <person name="Wambutt R."/>
            <person name="Purnelle B."/>
            <person name="Goffeau A."/>
            <person name="Cadieu E."/>
            <person name="Dreano S."/>
            <person name="Gloux S."/>
            <person name="Lelaure V."/>
            <person name="Mottier S."/>
            <person name="Galibert F."/>
            <person name="Aves S.J."/>
            <person name="Xiang Z."/>
            <person name="Hunt C."/>
            <person name="Moore K."/>
            <person name="Hurst S.M."/>
            <person name="Lucas M."/>
            <person name="Rochet M."/>
            <person name="Gaillardin C."/>
            <person name="Tallada V.A."/>
            <person name="Garzon A."/>
            <person name="Thode G."/>
            <person name="Daga R.R."/>
            <person name="Cruzado L."/>
            <person name="Jimenez J."/>
            <person name="Sanchez M."/>
            <person name="del Rey F."/>
            <person name="Benito J."/>
            <person name="Dominguez A."/>
            <person name="Revuelta J.L."/>
            <person name="Moreno S."/>
            <person name="Armstrong J."/>
            <person name="Forsburg S.L."/>
            <person name="Cerutti L."/>
            <person name="Lowe T."/>
            <person name="McCombie W.R."/>
            <person name="Paulsen I."/>
            <person name="Potashkin J."/>
            <person name="Shpakovski G.V."/>
            <person name="Ussery D."/>
            <person name="Barrell B.G."/>
            <person name="Nurse P."/>
        </authorList>
    </citation>
    <scope>NUCLEOTIDE SEQUENCE [LARGE SCALE GENOMIC DNA]</scope>
    <source>
        <strain>972 / ATCC 24843</strain>
    </source>
</reference>
<reference key="2">
    <citation type="journal article" date="2002" name="Nat. Genet.">
        <title>The transcriptional program of meiosis and sporulation in fission yeast.</title>
        <authorList>
            <person name="Mata J."/>
            <person name="Lyne R."/>
            <person name="Burns G."/>
            <person name="Baehler J."/>
        </authorList>
    </citation>
    <scope>FUNCTION</scope>
</reference>
<reference key="3">
    <citation type="journal article" date="2006" name="Nat. Biotechnol.">
        <title>ORFeome cloning and global analysis of protein localization in the fission yeast Schizosaccharomyces pombe.</title>
        <authorList>
            <person name="Matsuyama A."/>
            <person name="Arai R."/>
            <person name="Yashiroda Y."/>
            <person name="Shirai A."/>
            <person name="Kamata A."/>
            <person name="Sekido S."/>
            <person name="Kobayashi Y."/>
            <person name="Hashimoto A."/>
            <person name="Hamamoto M."/>
            <person name="Hiraoka Y."/>
            <person name="Horinouchi S."/>
            <person name="Yoshida M."/>
        </authorList>
    </citation>
    <scope>SUBCELLULAR LOCATION [LARGE SCALE ANALYSIS]</scope>
</reference>
<accession>Q8TFH5</accession>
<feature type="chain" id="PRO_0000304028" description="Meiotically up-regulated protein PB17E12.09">
    <location>
        <begin position="1"/>
        <end position="203"/>
    </location>
</feature>
<feature type="coiled-coil region" evidence="1">
    <location>
        <begin position="92"/>
        <end position="177"/>
    </location>
</feature>
<proteinExistence type="predicted"/>
<sequence>MQDRFLKENTEIINLSSSIHPNRDSYLDSQSDPLNQNLYNIETENVKDLNIEDVDYYEKLQNFKIVDENIDPGLRTYSKRSVGVNNTFQNPCNRKIEGYIKEIERLSNSNKNLQAAVLQMAVSDTDDPRLKEEYKQTEKELLREISGNHKSKILKLEEELNDLKHSMKEMQLYMTKIIDKAMNNASLENLFSLDENNTKIHDK</sequence>
<protein>
    <recommendedName>
        <fullName>Meiotically up-regulated protein PB17E12.09</fullName>
    </recommendedName>
</protein>
<name>YIK9_SCHPO</name>
<gene>
    <name type="ORF">SPAPB17E12.09</name>
</gene>
<comment type="function">
    <text evidence="2">Has a role in meiosis and sporulation.</text>
</comment>
<comment type="subcellular location">
    <subcellularLocation>
        <location evidence="3">Cytoplasm</location>
    </subcellularLocation>
    <text>Localizes at the barrier septum and the cell tip.</text>
</comment>
<keyword id="KW-0175">Coiled coil</keyword>
<keyword id="KW-0963">Cytoplasm</keyword>
<keyword id="KW-0469">Meiosis</keyword>
<keyword id="KW-1185">Reference proteome</keyword>
<evidence type="ECO:0000255" key="1"/>
<evidence type="ECO:0000269" key="2">
    <source>
    </source>
</evidence>
<evidence type="ECO:0000269" key="3">
    <source>
    </source>
</evidence>
<organism>
    <name type="scientific">Schizosaccharomyces pombe (strain 972 / ATCC 24843)</name>
    <name type="common">Fission yeast</name>
    <dbReference type="NCBI Taxonomy" id="284812"/>
    <lineage>
        <taxon>Eukaryota</taxon>
        <taxon>Fungi</taxon>
        <taxon>Dikarya</taxon>
        <taxon>Ascomycota</taxon>
        <taxon>Taphrinomycotina</taxon>
        <taxon>Schizosaccharomycetes</taxon>
        <taxon>Schizosaccharomycetales</taxon>
        <taxon>Schizosaccharomycetaceae</taxon>
        <taxon>Schizosaccharomyces</taxon>
    </lineage>
</organism>